<name>RBFA_CELJU</name>
<sequence length="136" mass="15306">MPREFTRSDRVSDAIQRLLAQVIPQEVRDPRLGMVNINAVAVSRDMAFAKVYVTFVGVTDEPKSLEGIGILNKASGFLRSFVARELSMRTVPKLQFIYDKTSIRGQELSSLIDRAIAEDRLHPQGDQTDDQQEGRD</sequence>
<keyword id="KW-0963">Cytoplasm</keyword>
<keyword id="KW-1185">Reference proteome</keyword>
<keyword id="KW-0690">Ribosome biogenesis</keyword>
<protein>
    <recommendedName>
        <fullName evidence="1">Ribosome-binding factor A</fullName>
    </recommendedName>
</protein>
<proteinExistence type="inferred from homology"/>
<comment type="function">
    <text evidence="1">One of several proteins that assist in the late maturation steps of the functional core of the 30S ribosomal subunit. Associates with free 30S ribosomal subunits (but not with 30S subunits that are part of 70S ribosomes or polysomes). Required for efficient processing of 16S rRNA. May interact with the 5'-terminal helix region of 16S rRNA.</text>
</comment>
<comment type="subunit">
    <text evidence="1">Monomer. Binds 30S ribosomal subunits, but not 50S ribosomal subunits or 70S ribosomes.</text>
</comment>
<comment type="subcellular location">
    <subcellularLocation>
        <location evidence="1">Cytoplasm</location>
    </subcellularLocation>
</comment>
<comment type="similarity">
    <text evidence="1">Belongs to the RbfA family.</text>
</comment>
<reference key="1">
    <citation type="journal article" date="2008" name="J. Bacteriol.">
        <title>Insights into plant cell wall degradation from the genome sequence of the soil bacterium Cellvibrio japonicus.</title>
        <authorList>
            <person name="DeBoy R.T."/>
            <person name="Mongodin E.F."/>
            <person name="Fouts D.E."/>
            <person name="Tailford L.E."/>
            <person name="Khouri H."/>
            <person name="Emerson J.B."/>
            <person name="Mohamoud Y."/>
            <person name="Watkins K."/>
            <person name="Henrissat B."/>
            <person name="Gilbert H.J."/>
            <person name="Nelson K.E."/>
        </authorList>
    </citation>
    <scope>NUCLEOTIDE SEQUENCE [LARGE SCALE GENOMIC DNA]</scope>
    <source>
        <strain>Ueda107</strain>
    </source>
</reference>
<organism>
    <name type="scientific">Cellvibrio japonicus (strain Ueda107)</name>
    <name type="common">Pseudomonas fluorescens subsp. cellulosa</name>
    <dbReference type="NCBI Taxonomy" id="498211"/>
    <lineage>
        <taxon>Bacteria</taxon>
        <taxon>Pseudomonadati</taxon>
        <taxon>Pseudomonadota</taxon>
        <taxon>Gammaproteobacteria</taxon>
        <taxon>Cellvibrionales</taxon>
        <taxon>Cellvibrionaceae</taxon>
        <taxon>Cellvibrio</taxon>
    </lineage>
</organism>
<feature type="chain" id="PRO_1000088867" description="Ribosome-binding factor A">
    <location>
        <begin position="1"/>
        <end position="136"/>
    </location>
</feature>
<accession>B3PI97</accession>
<gene>
    <name evidence="1" type="primary">rbfA</name>
    <name type="ordered locus">CJA_0437</name>
</gene>
<evidence type="ECO:0000255" key="1">
    <source>
        <dbReference type="HAMAP-Rule" id="MF_00003"/>
    </source>
</evidence>
<dbReference type="EMBL" id="CP000934">
    <property type="protein sequence ID" value="ACE83776.1"/>
    <property type="molecule type" value="Genomic_DNA"/>
</dbReference>
<dbReference type="RefSeq" id="WP_012486118.1">
    <property type="nucleotide sequence ID" value="NC_010995.1"/>
</dbReference>
<dbReference type="SMR" id="B3PI97"/>
<dbReference type="STRING" id="498211.CJA_0437"/>
<dbReference type="KEGG" id="cja:CJA_0437"/>
<dbReference type="eggNOG" id="COG0858">
    <property type="taxonomic scope" value="Bacteria"/>
</dbReference>
<dbReference type="HOGENOM" id="CLU_089475_5_0_6"/>
<dbReference type="OrthoDB" id="307788at2"/>
<dbReference type="Proteomes" id="UP000001036">
    <property type="component" value="Chromosome"/>
</dbReference>
<dbReference type="GO" id="GO:0005829">
    <property type="term" value="C:cytosol"/>
    <property type="evidence" value="ECO:0007669"/>
    <property type="project" value="TreeGrafter"/>
</dbReference>
<dbReference type="GO" id="GO:0043024">
    <property type="term" value="F:ribosomal small subunit binding"/>
    <property type="evidence" value="ECO:0007669"/>
    <property type="project" value="TreeGrafter"/>
</dbReference>
<dbReference type="GO" id="GO:0030490">
    <property type="term" value="P:maturation of SSU-rRNA"/>
    <property type="evidence" value="ECO:0007669"/>
    <property type="project" value="UniProtKB-UniRule"/>
</dbReference>
<dbReference type="Gene3D" id="3.30.300.20">
    <property type="match status" value="1"/>
</dbReference>
<dbReference type="HAMAP" id="MF_00003">
    <property type="entry name" value="RbfA"/>
    <property type="match status" value="1"/>
</dbReference>
<dbReference type="InterPro" id="IPR015946">
    <property type="entry name" value="KH_dom-like_a/b"/>
</dbReference>
<dbReference type="InterPro" id="IPR000238">
    <property type="entry name" value="RbfA"/>
</dbReference>
<dbReference type="InterPro" id="IPR023799">
    <property type="entry name" value="RbfA_dom_sf"/>
</dbReference>
<dbReference type="InterPro" id="IPR020053">
    <property type="entry name" value="Ribosome-bd_factorA_CS"/>
</dbReference>
<dbReference type="NCBIfam" id="TIGR00082">
    <property type="entry name" value="rbfA"/>
    <property type="match status" value="1"/>
</dbReference>
<dbReference type="PANTHER" id="PTHR33515">
    <property type="entry name" value="RIBOSOME-BINDING FACTOR A, CHLOROPLASTIC-RELATED"/>
    <property type="match status" value="1"/>
</dbReference>
<dbReference type="PANTHER" id="PTHR33515:SF1">
    <property type="entry name" value="RIBOSOME-BINDING FACTOR A, CHLOROPLASTIC-RELATED"/>
    <property type="match status" value="1"/>
</dbReference>
<dbReference type="Pfam" id="PF02033">
    <property type="entry name" value="RBFA"/>
    <property type="match status" value="1"/>
</dbReference>
<dbReference type="SUPFAM" id="SSF89919">
    <property type="entry name" value="Ribosome-binding factor A, RbfA"/>
    <property type="match status" value="1"/>
</dbReference>
<dbReference type="PROSITE" id="PS01319">
    <property type="entry name" value="RBFA"/>
    <property type="match status" value="1"/>
</dbReference>